<name>MQO_MYCBT</name>
<organism>
    <name type="scientific">Mycobacterium bovis (strain BCG / Tokyo 172 / ATCC 35737 / TMC 1019)</name>
    <dbReference type="NCBI Taxonomy" id="561275"/>
    <lineage>
        <taxon>Bacteria</taxon>
        <taxon>Bacillati</taxon>
        <taxon>Actinomycetota</taxon>
        <taxon>Actinomycetes</taxon>
        <taxon>Mycobacteriales</taxon>
        <taxon>Mycobacteriaceae</taxon>
        <taxon>Mycobacterium</taxon>
        <taxon>Mycobacterium tuberculosis complex</taxon>
    </lineage>
</organism>
<protein>
    <recommendedName>
        <fullName evidence="1">Probable malate:quinone oxidoreductase</fullName>
        <ecNumber evidence="1">1.1.5.4</ecNumber>
    </recommendedName>
    <alternativeName>
        <fullName evidence="1">MQO</fullName>
    </alternativeName>
    <alternativeName>
        <fullName evidence="1">Malate dehydrogenase [quinone]</fullName>
    </alternativeName>
</protein>
<reference key="1">
    <citation type="journal article" date="2009" name="Vaccine">
        <title>Whole genome sequence analysis of Mycobacterium bovis bacillus Calmette-Guerin (BCG) Tokyo 172: a comparative study of BCG vaccine substrains.</title>
        <authorList>
            <person name="Seki M."/>
            <person name="Honda I."/>
            <person name="Fujita I."/>
            <person name="Yano I."/>
            <person name="Yamamoto S."/>
            <person name="Koyama A."/>
        </authorList>
    </citation>
    <scope>NUCLEOTIDE SEQUENCE [LARGE SCALE GENOMIC DNA]</scope>
    <source>
        <strain>BCG / Tokyo 172 / ATCC 35737 / TMC 1019</strain>
    </source>
</reference>
<feature type="chain" id="PRO_1000124771" description="Probable malate:quinone oxidoreductase">
    <location>
        <begin position="1"/>
        <end position="493"/>
    </location>
</feature>
<proteinExistence type="inferred from homology"/>
<accession>C1AFW6</accession>
<keyword id="KW-0274">FAD</keyword>
<keyword id="KW-0285">Flavoprotein</keyword>
<keyword id="KW-0560">Oxidoreductase</keyword>
<keyword id="KW-0816">Tricarboxylic acid cycle</keyword>
<comment type="catalytic activity">
    <reaction evidence="1">
        <text>(S)-malate + a quinone = a quinol + oxaloacetate</text>
        <dbReference type="Rhea" id="RHEA:46012"/>
        <dbReference type="ChEBI" id="CHEBI:15589"/>
        <dbReference type="ChEBI" id="CHEBI:16452"/>
        <dbReference type="ChEBI" id="CHEBI:24646"/>
        <dbReference type="ChEBI" id="CHEBI:132124"/>
        <dbReference type="EC" id="1.1.5.4"/>
    </reaction>
</comment>
<comment type="cofactor">
    <cofactor evidence="1">
        <name>FAD</name>
        <dbReference type="ChEBI" id="CHEBI:57692"/>
    </cofactor>
</comment>
<comment type="pathway">
    <text evidence="1">Carbohydrate metabolism; tricarboxylic acid cycle; oxaloacetate from (S)-malate (quinone route): step 1/1.</text>
</comment>
<comment type="similarity">
    <text evidence="1">Belongs to the MQO family.</text>
</comment>
<evidence type="ECO:0000255" key="1">
    <source>
        <dbReference type="HAMAP-Rule" id="MF_00212"/>
    </source>
</evidence>
<sequence>MSDLARTDVVLIGAGIMSATLGVLLRRLEPNWSITLIERLDAVAAESSGPWNNAGTGHSALCEMNYTPEMPDGSIDITKAVRVNEQFQVTRQFWAYAAENGILTDVRSFLNPVPHVSFVHGSRGVEYLRRRQKALAGNPLFAGTEFIESPDEFARRLPFMAAKRAFSEPVALNWAADGTDVDFGALAKQLIGYCVQNGTTALFGHEVRNLSRQSDGSWTVTMCNRRTGEKRKLNTKFVFVGAGGDTLPVLQKSGIKEVKGFAGFPIGGRFLRAGNPALTASHRAKVYGFPAPGAPPLGALHLDLRFVNGKSWLVFGPYAGWSPKFLKHGQISDLPRSIRPDNLLSVLGVGLTERRLLNYLISQLRLSEPERVSALREFAPSAIDSDWELTIAGQRVQVIRRDERNGGVLEFGTTVIGDADGSIAGLLGGSPGASTAVAIMLDVLQKCFANRYQSWLPTLKEMVPSLGVQLSNEPALFDEVWSWSTKALKLGAA</sequence>
<gene>
    <name evidence="1" type="primary">mqo</name>
    <name type="ordered locus">JTY_2867</name>
</gene>
<dbReference type="EC" id="1.1.5.4" evidence="1"/>
<dbReference type="EMBL" id="AP010918">
    <property type="protein sequence ID" value="BAH27145.1"/>
    <property type="molecule type" value="Genomic_DNA"/>
</dbReference>
<dbReference type="RefSeq" id="WP_003414545.1">
    <property type="nucleotide sequence ID" value="NZ_CP014566.1"/>
</dbReference>
<dbReference type="SMR" id="C1AFW6"/>
<dbReference type="GeneID" id="45426839"/>
<dbReference type="KEGG" id="mbt:JTY_2867"/>
<dbReference type="HOGENOM" id="CLU_028151_0_0_11"/>
<dbReference type="UniPathway" id="UPA00223">
    <property type="reaction ID" value="UER01008"/>
</dbReference>
<dbReference type="GO" id="GO:0047545">
    <property type="term" value="F:2-hydroxyglutarate dehydrogenase activity"/>
    <property type="evidence" value="ECO:0007669"/>
    <property type="project" value="TreeGrafter"/>
</dbReference>
<dbReference type="GO" id="GO:0008924">
    <property type="term" value="F:L-malate dehydrogenase (quinone) activity"/>
    <property type="evidence" value="ECO:0007669"/>
    <property type="project" value="UniProtKB-UniRule"/>
</dbReference>
<dbReference type="GO" id="GO:0006099">
    <property type="term" value="P:tricarboxylic acid cycle"/>
    <property type="evidence" value="ECO:0007669"/>
    <property type="project" value="UniProtKB-UniRule"/>
</dbReference>
<dbReference type="Gene3D" id="3.30.9.10">
    <property type="entry name" value="D-Amino Acid Oxidase, subunit A, domain 2"/>
    <property type="match status" value="1"/>
</dbReference>
<dbReference type="Gene3D" id="3.50.50.60">
    <property type="entry name" value="FAD/NAD(P)-binding domain"/>
    <property type="match status" value="1"/>
</dbReference>
<dbReference type="HAMAP" id="MF_00212">
    <property type="entry name" value="MQO"/>
    <property type="match status" value="1"/>
</dbReference>
<dbReference type="InterPro" id="IPR036188">
    <property type="entry name" value="FAD/NAD-bd_sf"/>
</dbReference>
<dbReference type="InterPro" id="IPR006231">
    <property type="entry name" value="MQO"/>
</dbReference>
<dbReference type="NCBIfam" id="TIGR01320">
    <property type="entry name" value="mal_quin_oxido"/>
    <property type="match status" value="1"/>
</dbReference>
<dbReference type="NCBIfam" id="NF003606">
    <property type="entry name" value="PRK05257.2-1"/>
    <property type="match status" value="1"/>
</dbReference>
<dbReference type="NCBIfam" id="NF003611">
    <property type="entry name" value="PRK05257.3-2"/>
    <property type="match status" value="1"/>
</dbReference>
<dbReference type="PANTHER" id="PTHR43104">
    <property type="entry name" value="L-2-HYDROXYGLUTARATE DEHYDROGENASE, MITOCHONDRIAL"/>
    <property type="match status" value="1"/>
</dbReference>
<dbReference type="PANTHER" id="PTHR43104:SF2">
    <property type="entry name" value="L-2-HYDROXYGLUTARATE DEHYDROGENASE, MITOCHONDRIAL"/>
    <property type="match status" value="1"/>
</dbReference>
<dbReference type="Pfam" id="PF06039">
    <property type="entry name" value="Mqo"/>
    <property type="match status" value="1"/>
</dbReference>
<dbReference type="SUPFAM" id="SSF51905">
    <property type="entry name" value="FAD/NAD(P)-binding domain"/>
    <property type="match status" value="1"/>
</dbReference>